<name>NRDR_LACCB</name>
<organism>
    <name type="scientific">Lacticaseibacillus casei (strain BL23)</name>
    <name type="common">Lactobacillus casei</name>
    <dbReference type="NCBI Taxonomy" id="543734"/>
    <lineage>
        <taxon>Bacteria</taxon>
        <taxon>Bacillati</taxon>
        <taxon>Bacillota</taxon>
        <taxon>Bacilli</taxon>
        <taxon>Lactobacillales</taxon>
        <taxon>Lactobacillaceae</taxon>
        <taxon>Lacticaseibacillus</taxon>
    </lineage>
</organism>
<sequence length="155" mass="18049">MQCPHCHHNSSRVVDSRPTDGGRAIRRRRECENCGFRFTTFERVEQTPLLVIKKNGTREEFNREKILKGLIRAAEKRPVTMEQMQSIVDSVENQLRAIGENEVSSQAIGEFVMSKLADVDDVAYIRFASVYRQFKDMSVFMQELQDMMKKEKTKK</sequence>
<evidence type="ECO:0000255" key="1">
    <source>
        <dbReference type="HAMAP-Rule" id="MF_00440"/>
    </source>
</evidence>
<evidence type="ECO:0000256" key="2">
    <source>
        <dbReference type="SAM" id="MobiDB-lite"/>
    </source>
</evidence>
<keyword id="KW-0067">ATP-binding</keyword>
<keyword id="KW-0238">DNA-binding</keyword>
<keyword id="KW-0479">Metal-binding</keyword>
<keyword id="KW-0547">Nucleotide-binding</keyword>
<keyword id="KW-0678">Repressor</keyword>
<keyword id="KW-0804">Transcription</keyword>
<keyword id="KW-0805">Transcription regulation</keyword>
<keyword id="KW-0862">Zinc</keyword>
<keyword id="KW-0863">Zinc-finger</keyword>
<proteinExistence type="inferred from homology"/>
<dbReference type="EMBL" id="FM177140">
    <property type="protein sequence ID" value="CAQ67004.1"/>
    <property type="molecule type" value="Genomic_DNA"/>
</dbReference>
<dbReference type="SMR" id="B3WF53"/>
<dbReference type="KEGG" id="lcb:LCABL_19250"/>
<dbReference type="HOGENOM" id="CLU_108412_0_0_9"/>
<dbReference type="GO" id="GO:0005524">
    <property type="term" value="F:ATP binding"/>
    <property type="evidence" value="ECO:0007669"/>
    <property type="project" value="UniProtKB-KW"/>
</dbReference>
<dbReference type="GO" id="GO:0003677">
    <property type="term" value="F:DNA binding"/>
    <property type="evidence" value="ECO:0007669"/>
    <property type="project" value="UniProtKB-KW"/>
</dbReference>
<dbReference type="GO" id="GO:0008270">
    <property type="term" value="F:zinc ion binding"/>
    <property type="evidence" value="ECO:0007669"/>
    <property type="project" value="UniProtKB-UniRule"/>
</dbReference>
<dbReference type="GO" id="GO:0045892">
    <property type="term" value="P:negative regulation of DNA-templated transcription"/>
    <property type="evidence" value="ECO:0007669"/>
    <property type="project" value="UniProtKB-UniRule"/>
</dbReference>
<dbReference type="HAMAP" id="MF_00440">
    <property type="entry name" value="NrdR"/>
    <property type="match status" value="1"/>
</dbReference>
<dbReference type="InterPro" id="IPR005144">
    <property type="entry name" value="ATP-cone_dom"/>
</dbReference>
<dbReference type="InterPro" id="IPR055173">
    <property type="entry name" value="NrdR-like_N"/>
</dbReference>
<dbReference type="InterPro" id="IPR003796">
    <property type="entry name" value="RNR_NrdR-like"/>
</dbReference>
<dbReference type="NCBIfam" id="TIGR00244">
    <property type="entry name" value="transcriptional regulator NrdR"/>
    <property type="match status" value="1"/>
</dbReference>
<dbReference type="PANTHER" id="PTHR30455">
    <property type="entry name" value="TRANSCRIPTIONAL REPRESSOR NRDR"/>
    <property type="match status" value="1"/>
</dbReference>
<dbReference type="PANTHER" id="PTHR30455:SF2">
    <property type="entry name" value="TRANSCRIPTIONAL REPRESSOR NRDR"/>
    <property type="match status" value="1"/>
</dbReference>
<dbReference type="Pfam" id="PF03477">
    <property type="entry name" value="ATP-cone"/>
    <property type="match status" value="1"/>
</dbReference>
<dbReference type="Pfam" id="PF22811">
    <property type="entry name" value="Zn_ribbon_NrdR"/>
    <property type="match status" value="1"/>
</dbReference>
<dbReference type="PROSITE" id="PS51161">
    <property type="entry name" value="ATP_CONE"/>
    <property type="match status" value="1"/>
</dbReference>
<comment type="function">
    <text evidence="1">Negatively regulates transcription of bacterial ribonucleotide reductase nrd genes and operons by binding to NrdR-boxes.</text>
</comment>
<comment type="cofactor">
    <cofactor evidence="1">
        <name>Zn(2+)</name>
        <dbReference type="ChEBI" id="CHEBI:29105"/>
    </cofactor>
    <text evidence="1">Binds 1 zinc ion.</text>
</comment>
<comment type="similarity">
    <text evidence="1">Belongs to the NrdR family.</text>
</comment>
<accession>B3WF53</accession>
<reference key="1">
    <citation type="submission" date="2008-06" db="EMBL/GenBank/DDBJ databases">
        <title>Lactobacillus casei BL23 complete genome sequence.</title>
        <authorList>
            <person name="Maze A."/>
            <person name="Boel G."/>
            <person name="Bourand A."/>
            <person name="Loux V."/>
            <person name="Gibrat J.F."/>
            <person name="Zuniga M."/>
            <person name="Hartke A."/>
            <person name="Deutscher J."/>
        </authorList>
    </citation>
    <scope>NUCLEOTIDE SEQUENCE [LARGE SCALE GENOMIC DNA]</scope>
    <source>
        <strain>BL23</strain>
    </source>
</reference>
<feature type="chain" id="PRO_1000124516" description="Transcriptional repressor NrdR">
    <location>
        <begin position="1"/>
        <end position="155"/>
    </location>
</feature>
<feature type="domain" description="ATP-cone" evidence="1">
    <location>
        <begin position="49"/>
        <end position="139"/>
    </location>
</feature>
<feature type="zinc finger region" evidence="1">
    <location>
        <begin position="3"/>
        <end position="34"/>
    </location>
</feature>
<feature type="region of interest" description="Disordered" evidence="2">
    <location>
        <begin position="1"/>
        <end position="21"/>
    </location>
</feature>
<feature type="compositionally biased region" description="Basic residues" evidence="2">
    <location>
        <begin position="1"/>
        <end position="10"/>
    </location>
</feature>
<gene>
    <name evidence="1" type="primary">nrdR</name>
    <name type="ordered locus">LCABL_19250</name>
</gene>
<protein>
    <recommendedName>
        <fullName evidence="1">Transcriptional repressor NrdR</fullName>
    </recommendedName>
</protein>